<evidence type="ECO:0000250" key="1"/>
<evidence type="ECO:0000256" key="2">
    <source>
        <dbReference type="SAM" id="MobiDB-lite"/>
    </source>
</evidence>
<evidence type="ECO:0000305" key="3"/>
<proteinExistence type="inferred from homology"/>
<comment type="function">
    <text evidence="1">Stationary phase-essential protein not required for growth on nonfermentable carbon sources.</text>
</comment>
<comment type="similarity">
    <text evidence="3">Belongs to the SPG4 family.</text>
</comment>
<organism>
    <name type="scientific">Kluyveromyces lactis (strain ATCC 8585 / CBS 2359 / DSM 70799 / NBRC 1267 / NRRL Y-1140 / WM37)</name>
    <name type="common">Yeast</name>
    <name type="synonym">Candida sphaerica</name>
    <dbReference type="NCBI Taxonomy" id="284590"/>
    <lineage>
        <taxon>Eukaryota</taxon>
        <taxon>Fungi</taxon>
        <taxon>Dikarya</taxon>
        <taxon>Ascomycota</taxon>
        <taxon>Saccharomycotina</taxon>
        <taxon>Saccharomycetes</taxon>
        <taxon>Saccharomycetales</taxon>
        <taxon>Saccharomycetaceae</taxon>
        <taxon>Kluyveromyces</taxon>
    </lineage>
</organism>
<feature type="chain" id="PRO_0000405001" description="Stationary phase protein 4">
    <location>
        <begin position="1"/>
        <end position="127"/>
    </location>
</feature>
<feature type="region of interest" description="Disordered" evidence="2">
    <location>
        <begin position="71"/>
        <end position="94"/>
    </location>
</feature>
<accession>Q6CVE5</accession>
<protein>
    <recommendedName>
        <fullName>Stationary phase protein 4</fullName>
    </recommendedName>
</protein>
<reference key="1">
    <citation type="journal article" date="2004" name="Nature">
        <title>Genome evolution in yeasts.</title>
        <authorList>
            <person name="Dujon B."/>
            <person name="Sherman D."/>
            <person name="Fischer G."/>
            <person name="Durrens P."/>
            <person name="Casaregola S."/>
            <person name="Lafontaine I."/>
            <person name="de Montigny J."/>
            <person name="Marck C."/>
            <person name="Neuveglise C."/>
            <person name="Talla E."/>
            <person name="Goffard N."/>
            <person name="Frangeul L."/>
            <person name="Aigle M."/>
            <person name="Anthouard V."/>
            <person name="Babour A."/>
            <person name="Barbe V."/>
            <person name="Barnay S."/>
            <person name="Blanchin S."/>
            <person name="Beckerich J.-M."/>
            <person name="Beyne E."/>
            <person name="Bleykasten C."/>
            <person name="Boisrame A."/>
            <person name="Boyer J."/>
            <person name="Cattolico L."/>
            <person name="Confanioleri F."/>
            <person name="de Daruvar A."/>
            <person name="Despons L."/>
            <person name="Fabre E."/>
            <person name="Fairhead C."/>
            <person name="Ferry-Dumazet H."/>
            <person name="Groppi A."/>
            <person name="Hantraye F."/>
            <person name="Hennequin C."/>
            <person name="Jauniaux N."/>
            <person name="Joyet P."/>
            <person name="Kachouri R."/>
            <person name="Kerrest A."/>
            <person name="Koszul R."/>
            <person name="Lemaire M."/>
            <person name="Lesur I."/>
            <person name="Ma L."/>
            <person name="Muller H."/>
            <person name="Nicaud J.-M."/>
            <person name="Nikolski M."/>
            <person name="Oztas S."/>
            <person name="Ozier-Kalogeropoulos O."/>
            <person name="Pellenz S."/>
            <person name="Potier S."/>
            <person name="Richard G.-F."/>
            <person name="Straub M.-L."/>
            <person name="Suleau A."/>
            <person name="Swennen D."/>
            <person name="Tekaia F."/>
            <person name="Wesolowski-Louvel M."/>
            <person name="Westhof E."/>
            <person name="Wirth B."/>
            <person name="Zeniou-Meyer M."/>
            <person name="Zivanovic Y."/>
            <person name="Bolotin-Fukuhara M."/>
            <person name="Thierry A."/>
            <person name="Bouchier C."/>
            <person name="Caudron B."/>
            <person name="Scarpelli C."/>
            <person name="Gaillardin C."/>
            <person name="Weissenbach J."/>
            <person name="Wincker P."/>
            <person name="Souciet J.-L."/>
        </authorList>
    </citation>
    <scope>NUCLEOTIDE SEQUENCE [LARGE SCALE GENOMIC DNA]</scope>
    <source>
        <strain>ATCC 8585 / CBS 2359 / DSM 70799 / NBRC 1267 / NRRL Y-1140 / WM37</strain>
    </source>
</reference>
<name>SPG4_KLULA</name>
<sequence length="127" mass="13898">MSRFFDAFEVYNKNKHAPADFKSHGGSSLNTGATTAYMFAREYRGPSTGEKKEAAAAALAADVKAGKVELVNDPNTADSSRKSSVSEEAMPQMVDISKLTREEFEALYNKINPGMLRKGEPNNKVNF</sequence>
<gene>
    <name type="primary">SPG4</name>
    <name type="ordered locus">KLLA0B12650g</name>
</gene>
<keyword id="KW-1185">Reference proteome</keyword>
<dbReference type="EMBL" id="CR382122">
    <property type="protein sequence ID" value="CAH02487.1"/>
    <property type="molecule type" value="Genomic_DNA"/>
</dbReference>
<dbReference type="RefSeq" id="XP_452094.1">
    <property type="nucleotide sequence ID" value="XM_452094.1"/>
</dbReference>
<dbReference type="FunCoup" id="Q6CVE5">
    <property type="interactions" value="46"/>
</dbReference>
<dbReference type="STRING" id="284590.Q6CVE5"/>
<dbReference type="PaxDb" id="284590-Q6CVE5"/>
<dbReference type="KEGG" id="kla:KLLA0_B12650g"/>
<dbReference type="eggNOG" id="ENOG502S7JY">
    <property type="taxonomic scope" value="Eukaryota"/>
</dbReference>
<dbReference type="HOGENOM" id="CLU_2158879_0_0_1"/>
<dbReference type="InParanoid" id="Q6CVE5"/>
<dbReference type="OMA" id="AHEYREP"/>
<dbReference type="Proteomes" id="UP000000598">
    <property type="component" value="Chromosome B"/>
</dbReference>
<dbReference type="InterPro" id="IPR020485">
    <property type="entry name" value="Spg4"/>
</dbReference>
<dbReference type="Pfam" id="PF17325">
    <property type="entry name" value="SPG4"/>
    <property type="match status" value="1"/>
</dbReference>